<dbReference type="EMBL" id="AJ251097">
    <property type="protein sequence ID" value="CAB63940.1"/>
    <property type="molecule type" value="mRNA"/>
</dbReference>
<dbReference type="EMBL" id="AJ507799">
    <property type="protein sequence ID" value="CAD53460.1"/>
    <property type="molecule type" value="Genomic_DNA"/>
</dbReference>
<dbReference type="RefSeq" id="YP_401710.1">
    <property type="nucleotide sequence ID" value="NC_007605.1"/>
</dbReference>
<dbReference type="IntAct" id="Q9Q2P0">
    <property type="interactions" value="4"/>
</dbReference>
<dbReference type="MINT" id="Q9Q2P0"/>
<dbReference type="DNASU" id="3783757"/>
<dbReference type="GeneID" id="3783757"/>
<dbReference type="KEGG" id="vg:3783757"/>
<dbReference type="Proteomes" id="UP000153037">
    <property type="component" value="Segment"/>
</dbReference>
<feature type="chain" id="PRO_0000382433" description="Uncharacterized protein RPMS1">
    <location>
        <begin position="1"/>
        <end position="103"/>
    </location>
</feature>
<feature type="region of interest" description="Disordered" evidence="1">
    <location>
        <begin position="1"/>
        <end position="103"/>
    </location>
</feature>
<feature type="compositionally biased region" description="Low complexity" evidence="1">
    <location>
        <begin position="35"/>
        <end position="44"/>
    </location>
</feature>
<feature type="compositionally biased region" description="Basic residues" evidence="1">
    <location>
        <begin position="55"/>
        <end position="65"/>
    </location>
</feature>
<feature type="compositionally biased region" description="Basic residues" evidence="1">
    <location>
        <begin position="74"/>
        <end position="84"/>
    </location>
</feature>
<organismHost>
    <name type="scientific">Homo sapiens</name>
    <name type="common">Human</name>
    <dbReference type="NCBI Taxonomy" id="9606"/>
</organismHost>
<keyword id="KW-1185">Reference proteome</keyword>
<evidence type="ECO:0000256" key="1">
    <source>
        <dbReference type="SAM" id="MobiDB-lite"/>
    </source>
</evidence>
<evidence type="ECO:0000305" key="2"/>
<protein>
    <recommendedName>
        <fullName>Uncharacterized protein RPMS1</fullName>
    </recommendedName>
</protein>
<name>RPMS1_EBVB9</name>
<accession>Q9Q2P0</accession>
<sequence>MAGARRRARCPASAGCAYSARPPPLSTRGRRISAGSGQPRWWPWGSPPPPDTRYRRPGPGRRARSCLHAGPRGRPPHSRTRARRTSPGAGGGGWRGGSCTSQR</sequence>
<organism>
    <name type="scientific">Epstein-Barr virus (strain B95-8)</name>
    <name type="common">HHV-4</name>
    <name type="synonym">Human herpesvirus 4</name>
    <dbReference type="NCBI Taxonomy" id="10377"/>
    <lineage>
        <taxon>Viruses</taxon>
        <taxon>Duplodnaviria</taxon>
        <taxon>Heunggongvirae</taxon>
        <taxon>Peploviricota</taxon>
        <taxon>Herviviricetes</taxon>
        <taxon>Herpesvirales</taxon>
        <taxon>Orthoherpesviridae</taxon>
        <taxon>Gammaherpesvirinae</taxon>
        <taxon>Lymphocryptovirus</taxon>
        <taxon>Lymphocryptovirus humangamma4</taxon>
        <taxon>Epstein-Barr virus (strain GD1)</taxon>
    </lineage>
</organism>
<comment type="similarity">
    <text evidence="2">Belongs to the epstein-barr virus RPMS1 family.</text>
</comment>
<proteinExistence type="inferred from homology"/>
<reference key="1">
    <citation type="journal article" date="1984" name="Nature">
        <title>DNA sequence and expression of the B95-8 Epstein-Barr virus genome.</title>
        <authorList>
            <person name="Baer R."/>
            <person name="Bankier A.T."/>
            <person name="Biggin M.D."/>
            <person name="Deininger P.L."/>
            <person name="Farrell P.J."/>
            <person name="Gibson T.J."/>
            <person name="Hatfull G."/>
            <person name="Hudson G.S."/>
            <person name="Satchwell S.C."/>
            <person name="Seguin C."/>
            <person name="Tuffnell P.S."/>
            <person name="Barrell B.G."/>
        </authorList>
    </citation>
    <scope>NUCLEOTIDE SEQUENCE [LARGE SCALE GENOMIC DNA]</scope>
</reference>
<reference key="2">
    <citation type="journal article" date="2003" name="Virology">
        <title>Updated Epstein-Barr virus (EBV) DNA sequence and analysis of a promoter for the BART (CST, BARF0) RNAs of EBV.</title>
        <authorList>
            <person name="de Jesus O."/>
            <person name="Smith P.R."/>
            <person name="Spender L.C."/>
            <person name="Elgueta Karstegl C."/>
            <person name="Niller H.H."/>
            <person name="Huang D."/>
            <person name="Farrell P.J."/>
        </authorList>
    </citation>
    <scope>GENOME REANNOTATION</scope>
</reference>
<reference key="3">
    <citation type="journal article" date="2000" name="J. Virol.">
        <title>Structure and coding content of CST (BART) family RNAs of Epstein-Barr virus.</title>
        <authorList>
            <person name="Smith P.R."/>
            <person name="de Jesus O.D."/>
            <person name="Turner D."/>
            <person name="Hollyoake M."/>
            <person name="Elgueta Karstegl C."/>
            <person name="Griffin B.E."/>
            <person name="Karran L."/>
            <person name="Wang Y."/>
            <person name="Hayward D."/>
            <person name="Farrell P.J."/>
        </authorList>
    </citation>
    <scope>NUCLEOTIDE SEQUENCE [GENOMIC DNA]</scope>
    <source>
        <strain>C15</strain>
    </source>
</reference>
<gene>
    <name type="primary">RPMS1</name>
</gene>